<reference key="1">
    <citation type="journal article" date="1999" name="Nature">
        <title>Sequence and analysis of chromosome 4 of the plant Arabidopsis thaliana.</title>
        <authorList>
            <person name="Mayer K.F.X."/>
            <person name="Schueller C."/>
            <person name="Wambutt R."/>
            <person name="Murphy G."/>
            <person name="Volckaert G."/>
            <person name="Pohl T."/>
            <person name="Duesterhoeft A."/>
            <person name="Stiekema W."/>
            <person name="Entian K.-D."/>
            <person name="Terryn N."/>
            <person name="Harris B."/>
            <person name="Ansorge W."/>
            <person name="Brandt P."/>
            <person name="Grivell L.A."/>
            <person name="Rieger M."/>
            <person name="Weichselgartner M."/>
            <person name="de Simone V."/>
            <person name="Obermaier B."/>
            <person name="Mache R."/>
            <person name="Mueller M."/>
            <person name="Kreis M."/>
            <person name="Delseny M."/>
            <person name="Puigdomenech P."/>
            <person name="Watson M."/>
            <person name="Schmidtheini T."/>
            <person name="Reichert B."/>
            <person name="Portetelle D."/>
            <person name="Perez-Alonso M."/>
            <person name="Boutry M."/>
            <person name="Bancroft I."/>
            <person name="Vos P."/>
            <person name="Hoheisel J."/>
            <person name="Zimmermann W."/>
            <person name="Wedler H."/>
            <person name="Ridley P."/>
            <person name="Langham S.-A."/>
            <person name="McCullagh B."/>
            <person name="Bilham L."/>
            <person name="Robben J."/>
            <person name="van der Schueren J."/>
            <person name="Grymonprez B."/>
            <person name="Chuang Y.-J."/>
            <person name="Vandenbussche F."/>
            <person name="Braeken M."/>
            <person name="Weltjens I."/>
            <person name="Voet M."/>
            <person name="Bastiaens I."/>
            <person name="Aert R."/>
            <person name="Defoor E."/>
            <person name="Weitzenegger T."/>
            <person name="Bothe G."/>
            <person name="Ramsperger U."/>
            <person name="Hilbert H."/>
            <person name="Braun M."/>
            <person name="Holzer E."/>
            <person name="Brandt A."/>
            <person name="Peters S."/>
            <person name="van Staveren M."/>
            <person name="Dirkse W."/>
            <person name="Mooijman P."/>
            <person name="Klein Lankhorst R."/>
            <person name="Rose M."/>
            <person name="Hauf J."/>
            <person name="Koetter P."/>
            <person name="Berneiser S."/>
            <person name="Hempel S."/>
            <person name="Feldpausch M."/>
            <person name="Lamberth S."/>
            <person name="Van den Daele H."/>
            <person name="De Keyser A."/>
            <person name="Buysshaert C."/>
            <person name="Gielen J."/>
            <person name="Villarroel R."/>
            <person name="De Clercq R."/>
            <person name="van Montagu M."/>
            <person name="Rogers J."/>
            <person name="Cronin A."/>
            <person name="Quail M.A."/>
            <person name="Bray-Allen S."/>
            <person name="Clark L."/>
            <person name="Doggett J."/>
            <person name="Hall S."/>
            <person name="Kay M."/>
            <person name="Lennard N."/>
            <person name="McLay K."/>
            <person name="Mayes R."/>
            <person name="Pettett A."/>
            <person name="Rajandream M.A."/>
            <person name="Lyne M."/>
            <person name="Benes V."/>
            <person name="Rechmann S."/>
            <person name="Borkova D."/>
            <person name="Bloecker H."/>
            <person name="Scharfe M."/>
            <person name="Grimm M."/>
            <person name="Loehnert T.-H."/>
            <person name="Dose S."/>
            <person name="de Haan M."/>
            <person name="Maarse A.C."/>
            <person name="Schaefer M."/>
            <person name="Mueller-Auer S."/>
            <person name="Gabel C."/>
            <person name="Fuchs M."/>
            <person name="Fartmann B."/>
            <person name="Granderath K."/>
            <person name="Dauner D."/>
            <person name="Herzl A."/>
            <person name="Neumann S."/>
            <person name="Argiriou A."/>
            <person name="Vitale D."/>
            <person name="Liguori R."/>
            <person name="Piravandi E."/>
            <person name="Massenet O."/>
            <person name="Quigley F."/>
            <person name="Clabauld G."/>
            <person name="Muendlein A."/>
            <person name="Felber R."/>
            <person name="Schnabl S."/>
            <person name="Hiller R."/>
            <person name="Schmidt W."/>
            <person name="Lecharny A."/>
            <person name="Aubourg S."/>
            <person name="Chefdor F."/>
            <person name="Cooke R."/>
            <person name="Berger C."/>
            <person name="Monfort A."/>
            <person name="Casacuberta E."/>
            <person name="Gibbons T."/>
            <person name="Weber N."/>
            <person name="Vandenbol M."/>
            <person name="Bargues M."/>
            <person name="Terol J."/>
            <person name="Torres A."/>
            <person name="Perez-Perez A."/>
            <person name="Purnelle B."/>
            <person name="Bent E."/>
            <person name="Johnson S."/>
            <person name="Tacon D."/>
            <person name="Jesse T."/>
            <person name="Heijnen L."/>
            <person name="Schwarz S."/>
            <person name="Scholler P."/>
            <person name="Heber S."/>
            <person name="Francs P."/>
            <person name="Bielke C."/>
            <person name="Frishman D."/>
            <person name="Haase D."/>
            <person name="Lemcke K."/>
            <person name="Mewes H.-W."/>
            <person name="Stocker S."/>
            <person name="Zaccaria P."/>
            <person name="Bevan M."/>
            <person name="Wilson R.K."/>
            <person name="de la Bastide M."/>
            <person name="Habermann K."/>
            <person name="Parnell L."/>
            <person name="Dedhia N."/>
            <person name="Gnoj L."/>
            <person name="Schutz K."/>
            <person name="Huang E."/>
            <person name="Spiegel L."/>
            <person name="Sekhon M."/>
            <person name="Murray J."/>
            <person name="Sheet P."/>
            <person name="Cordes M."/>
            <person name="Abu-Threideh J."/>
            <person name="Stoneking T."/>
            <person name="Kalicki J."/>
            <person name="Graves T."/>
            <person name="Harmon G."/>
            <person name="Edwards J."/>
            <person name="Latreille P."/>
            <person name="Courtney L."/>
            <person name="Cloud J."/>
            <person name="Abbott A."/>
            <person name="Scott K."/>
            <person name="Johnson D."/>
            <person name="Minx P."/>
            <person name="Bentley D."/>
            <person name="Fulton B."/>
            <person name="Miller N."/>
            <person name="Greco T."/>
            <person name="Kemp K."/>
            <person name="Kramer J."/>
            <person name="Fulton L."/>
            <person name="Mardis E."/>
            <person name="Dante M."/>
            <person name="Pepin K."/>
            <person name="Hillier L.W."/>
            <person name="Nelson J."/>
            <person name="Spieth J."/>
            <person name="Ryan E."/>
            <person name="Andrews S."/>
            <person name="Geisel C."/>
            <person name="Layman D."/>
            <person name="Du H."/>
            <person name="Ali J."/>
            <person name="Berghoff A."/>
            <person name="Jones K."/>
            <person name="Drone K."/>
            <person name="Cotton M."/>
            <person name="Joshu C."/>
            <person name="Antonoiu B."/>
            <person name="Zidanic M."/>
            <person name="Strong C."/>
            <person name="Sun H."/>
            <person name="Lamar B."/>
            <person name="Yordan C."/>
            <person name="Ma P."/>
            <person name="Zhong J."/>
            <person name="Preston R."/>
            <person name="Vil D."/>
            <person name="Shekher M."/>
            <person name="Matero A."/>
            <person name="Shah R."/>
            <person name="Swaby I.K."/>
            <person name="O'Shaughnessy A."/>
            <person name="Rodriguez M."/>
            <person name="Hoffman J."/>
            <person name="Till S."/>
            <person name="Granat S."/>
            <person name="Shohdy N."/>
            <person name="Hasegawa A."/>
            <person name="Hameed A."/>
            <person name="Lodhi M."/>
            <person name="Johnson A."/>
            <person name="Chen E."/>
            <person name="Marra M.A."/>
            <person name="Martienssen R."/>
            <person name="McCombie W.R."/>
        </authorList>
    </citation>
    <scope>NUCLEOTIDE SEQUENCE [LARGE SCALE GENOMIC DNA]</scope>
    <source>
        <strain>cv. Columbia</strain>
    </source>
</reference>
<reference key="2">
    <citation type="journal article" date="2017" name="Plant J.">
        <title>Araport11: a complete reannotation of the Arabidopsis thaliana reference genome.</title>
        <authorList>
            <person name="Cheng C.Y."/>
            <person name="Krishnakumar V."/>
            <person name="Chan A.P."/>
            <person name="Thibaud-Nissen F."/>
            <person name="Schobel S."/>
            <person name="Town C.D."/>
        </authorList>
    </citation>
    <scope>GENOME REANNOTATION</scope>
    <source>
        <strain>cv. Columbia</strain>
    </source>
</reference>
<reference key="3">
    <citation type="journal article" date="2003" name="Science">
        <title>Empirical analysis of transcriptional activity in the Arabidopsis genome.</title>
        <authorList>
            <person name="Yamada K."/>
            <person name="Lim J."/>
            <person name="Dale J.M."/>
            <person name="Chen H."/>
            <person name="Shinn P."/>
            <person name="Palm C.J."/>
            <person name="Southwick A.M."/>
            <person name="Wu H.C."/>
            <person name="Kim C.J."/>
            <person name="Nguyen M."/>
            <person name="Pham P.K."/>
            <person name="Cheuk R.F."/>
            <person name="Karlin-Newmann G."/>
            <person name="Liu S.X."/>
            <person name="Lam B."/>
            <person name="Sakano H."/>
            <person name="Wu T."/>
            <person name="Yu G."/>
            <person name="Miranda M."/>
            <person name="Quach H.L."/>
            <person name="Tripp M."/>
            <person name="Chang C.H."/>
            <person name="Lee J.M."/>
            <person name="Toriumi M.J."/>
            <person name="Chan M.M."/>
            <person name="Tang C.C."/>
            <person name="Onodera C.S."/>
            <person name="Deng J.M."/>
            <person name="Akiyama K."/>
            <person name="Ansari Y."/>
            <person name="Arakawa T."/>
            <person name="Banh J."/>
            <person name="Banno F."/>
            <person name="Bowser L."/>
            <person name="Brooks S.Y."/>
            <person name="Carninci P."/>
            <person name="Chao Q."/>
            <person name="Choy N."/>
            <person name="Enju A."/>
            <person name="Goldsmith A.D."/>
            <person name="Gurjal M."/>
            <person name="Hansen N.F."/>
            <person name="Hayashizaki Y."/>
            <person name="Johnson-Hopson C."/>
            <person name="Hsuan V.W."/>
            <person name="Iida K."/>
            <person name="Karnes M."/>
            <person name="Khan S."/>
            <person name="Koesema E."/>
            <person name="Ishida J."/>
            <person name="Jiang P.X."/>
            <person name="Jones T."/>
            <person name="Kawai J."/>
            <person name="Kamiya A."/>
            <person name="Meyers C."/>
            <person name="Nakajima M."/>
            <person name="Narusaka M."/>
            <person name="Seki M."/>
            <person name="Sakurai T."/>
            <person name="Satou M."/>
            <person name="Tamse R."/>
            <person name="Vaysberg M."/>
            <person name="Wallender E.K."/>
            <person name="Wong C."/>
            <person name="Yamamura Y."/>
            <person name="Yuan S."/>
            <person name="Shinozaki K."/>
            <person name="Davis R.W."/>
            <person name="Theologis A."/>
            <person name="Ecker J.R."/>
        </authorList>
    </citation>
    <scope>NUCLEOTIDE SEQUENCE [LARGE SCALE MRNA]</scope>
    <source>
        <strain>cv. Columbia</strain>
    </source>
</reference>
<reference key="4">
    <citation type="journal article" date="2004" name="FEBS Lett.">
        <title>Identification of an Arabidopsis inorganic pyrophosphatase capable of being imported into chloroplasts.</title>
        <authorList>
            <person name="Schulze S."/>
            <person name="Mant A."/>
            <person name="Kossmann J."/>
            <person name="Lloyd J.R."/>
        </authorList>
    </citation>
    <scope>GENE FAMILY</scope>
    <scope>NOMENCLATURE</scope>
</reference>
<keyword id="KW-0963">Cytoplasm</keyword>
<keyword id="KW-0378">Hydrolase</keyword>
<keyword id="KW-0460">Magnesium</keyword>
<keyword id="KW-0479">Metal-binding</keyword>
<keyword id="KW-1185">Reference proteome</keyword>
<name>IPYR5_ARATH</name>
<sequence>MNGEEVKTSQPQKKLQNPTPRLNERILSSLSKRSVAAHPWHDLEIGPGAPVIFNVVIEISKGSKVKYELDKKTGLIKVDRILYSSVVYPHNYGFVPRTLCEDNDPIDVLVIMQEPVLPGCFLRARAIGLMPMIDQGEKDDKIIAVCVDDPEYKHITNINELPPHRLSEIRRFFEDYKKNENKEVAVNDFLQPGPAIEAIQYSMDLYAEYILHTLRR</sequence>
<proteinExistence type="evidence at transcript level"/>
<comment type="catalytic activity">
    <reaction evidence="4">
        <text>diphosphate + H2O = 2 phosphate + H(+)</text>
        <dbReference type="Rhea" id="RHEA:24576"/>
        <dbReference type="ChEBI" id="CHEBI:15377"/>
        <dbReference type="ChEBI" id="CHEBI:15378"/>
        <dbReference type="ChEBI" id="CHEBI:33019"/>
        <dbReference type="ChEBI" id="CHEBI:43474"/>
        <dbReference type="EC" id="3.6.1.1"/>
    </reaction>
</comment>
<comment type="cofactor">
    <cofactor evidence="2">
        <name>Mg(2+)</name>
        <dbReference type="ChEBI" id="CHEBI:18420"/>
    </cofactor>
</comment>
<comment type="subcellular location">
    <subcellularLocation>
        <location evidence="4">Cytoplasm</location>
    </subcellularLocation>
</comment>
<comment type="similarity">
    <text evidence="7">Belongs to the PPase family.</text>
</comment>
<evidence type="ECO:0000250" key="1">
    <source>
        <dbReference type="UniProtKB" id="P00817"/>
    </source>
</evidence>
<evidence type="ECO:0000250" key="2">
    <source>
        <dbReference type="UniProtKB" id="P0A7A9"/>
    </source>
</evidence>
<evidence type="ECO:0000250" key="3">
    <source>
        <dbReference type="UniProtKB" id="P9WI55"/>
    </source>
</evidence>
<evidence type="ECO:0000250" key="4">
    <source>
        <dbReference type="UniProtKB" id="Q93V56"/>
    </source>
</evidence>
<evidence type="ECO:0000256" key="5">
    <source>
        <dbReference type="SAM" id="MobiDB-lite"/>
    </source>
</evidence>
<evidence type="ECO:0000303" key="6">
    <source>
    </source>
</evidence>
<evidence type="ECO:0000305" key="7"/>
<evidence type="ECO:0000312" key="8">
    <source>
        <dbReference type="Araport" id="AT4G01480"/>
    </source>
</evidence>
<evidence type="ECO:0000312" key="9">
    <source>
        <dbReference type="EMBL" id="AAC62786.1"/>
    </source>
</evidence>
<evidence type="ECO:0000312" key="10">
    <source>
        <dbReference type="Proteomes" id="UP000006548"/>
    </source>
</evidence>
<gene>
    <name evidence="6" type="primary">PPA5</name>
    <name evidence="8" type="ordered locus">At4g01480</name>
    <name evidence="9" type="ORF">F11O4.12</name>
</gene>
<feature type="chain" id="PRO_0000431798" description="Soluble inorganic pyrophosphatase 5">
    <location>
        <begin position="1"/>
        <end position="216"/>
    </location>
</feature>
<feature type="region of interest" description="Disordered" evidence="5">
    <location>
        <begin position="1"/>
        <end position="20"/>
    </location>
</feature>
<feature type="compositionally biased region" description="Polar residues" evidence="5">
    <location>
        <begin position="8"/>
        <end position="20"/>
    </location>
</feature>
<feature type="active site" description="Proton donor" evidence="1">
    <location>
        <position position="88"/>
    </location>
</feature>
<feature type="binding site" evidence="3">
    <location>
        <position position="66"/>
    </location>
    <ligand>
        <name>substrate</name>
    </ligand>
</feature>
<feature type="binding site" evidence="3">
    <location>
        <position position="80"/>
    </location>
    <ligand>
        <name>substrate</name>
    </ligand>
</feature>
<feature type="binding site" evidence="3">
    <location>
        <position position="92"/>
    </location>
    <ligand>
        <name>substrate</name>
    </ligand>
</feature>
<feature type="binding site" evidence="2">
    <location>
        <position position="102"/>
    </location>
    <ligand>
        <name>Mg(2+)</name>
        <dbReference type="ChEBI" id="CHEBI:18420"/>
        <label>1</label>
    </ligand>
</feature>
<feature type="binding site" evidence="2">
    <location>
        <position position="107"/>
    </location>
    <ligand>
        <name>Mg(2+)</name>
        <dbReference type="ChEBI" id="CHEBI:18420"/>
        <label>1</label>
    </ligand>
</feature>
<feature type="binding site" evidence="2">
    <location>
        <position position="107"/>
    </location>
    <ligand>
        <name>Mg(2+)</name>
        <dbReference type="ChEBI" id="CHEBI:18420"/>
        <label>2</label>
    </ligand>
</feature>
<feature type="binding site" evidence="2">
    <location>
        <position position="139"/>
    </location>
    <ligand>
        <name>Mg(2+)</name>
        <dbReference type="ChEBI" id="CHEBI:18420"/>
        <label>1</label>
    </ligand>
</feature>
<feature type="binding site" evidence="3">
    <location>
        <position position="176"/>
    </location>
    <ligand>
        <name>substrate</name>
    </ligand>
</feature>
<protein>
    <recommendedName>
        <fullName evidence="6">Soluble inorganic pyrophosphatase 5</fullName>
        <ecNumber evidence="4">3.6.1.1</ecNumber>
    </recommendedName>
    <alternativeName>
        <fullName evidence="6">Pyrophosphate phospho-hydrolase 5</fullName>
        <shortName evidence="6">PPase 5</shortName>
    </alternativeName>
</protein>
<organism evidence="10">
    <name type="scientific">Arabidopsis thaliana</name>
    <name type="common">Mouse-ear cress</name>
    <dbReference type="NCBI Taxonomy" id="3702"/>
    <lineage>
        <taxon>Eukaryota</taxon>
        <taxon>Viridiplantae</taxon>
        <taxon>Streptophyta</taxon>
        <taxon>Embryophyta</taxon>
        <taxon>Tracheophyta</taxon>
        <taxon>Spermatophyta</taxon>
        <taxon>Magnoliopsida</taxon>
        <taxon>eudicotyledons</taxon>
        <taxon>Gunneridae</taxon>
        <taxon>Pentapetalae</taxon>
        <taxon>rosids</taxon>
        <taxon>malvids</taxon>
        <taxon>Brassicales</taxon>
        <taxon>Brassicaceae</taxon>
        <taxon>Camelineae</taxon>
        <taxon>Arabidopsis</taxon>
    </lineage>
</organism>
<dbReference type="EC" id="3.6.1.1" evidence="4"/>
<dbReference type="EMBL" id="AF096370">
    <property type="protein sequence ID" value="AAC62786.1"/>
    <property type="molecule type" value="Genomic_DNA"/>
</dbReference>
<dbReference type="EMBL" id="AL161492">
    <property type="protein sequence ID" value="CAB77718.1"/>
    <property type="molecule type" value="Genomic_DNA"/>
</dbReference>
<dbReference type="EMBL" id="CP002687">
    <property type="protein sequence ID" value="AEE82032.1"/>
    <property type="molecule type" value="Genomic_DNA"/>
</dbReference>
<dbReference type="EMBL" id="CP002687">
    <property type="protein sequence ID" value="ANM67519.1"/>
    <property type="molecule type" value="Genomic_DNA"/>
</dbReference>
<dbReference type="EMBL" id="AY054516">
    <property type="protein sequence ID" value="AAK96707.1"/>
    <property type="molecule type" value="mRNA"/>
</dbReference>
<dbReference type="EMBL" id="AY081667">
    <property type="protein sequence ID" value="AAM10229.1"/>
    <property type="molecule type" value="mRNA"/>
</dbReference>
<dbReference type="PIR" id="T01946">
    <property type="entry name" value="T01946"/>
</dbReference>
<dbReference type="RefSeq" id="NP_001329345.1">
    <property type="nucleotide sequence ID" value="NM_001340321.1"/>
</dbReference>
<dbReference type="RefSeq" id="NP_192057.1">
    <property type="nucleotide sequence ID" value="NM_116378.4"/>
</dbReference>
<dbReference type="SMR" id="O82597"/>
<dbReference type="FunCoup" id="O82597">
    <property type="interactions" value="52"/>
</dbReference>
<dbReference type="IntAct" id="O82597">
    <property type="interactions" value="6"/>
</dbReference>
<dbReference type="STRING" id="3702.O82597"/>
<dbReference type="iPTMnet" id="O82597"/>
<dbReference type="PaxDb" id="3702-AT4G01480.1"/>
<dbReference type="ProteomicsDB" id="248490"/>
<dbReference type="EnsemblPlants" id="AT4G01480.1">
    <property type="protein sequence ID" value="AT4G01480.1"/>
    <property type="gene ID" value="AT4G01480"/>
</dbReference>
<dbReference type="EnsemblPlants" id="AT4G01480.2">
    <property type="protein sequence ID" value="AT4G01480.2"/>
    <property type="gene ID" value="AT4G01480"/>
</dbReference>
<dbReference type="GeneID" id="827962"/>
<dbReference type="Gramene" id="AT4G01480.1">
    <property type="protein sequence ID" value="AT4G01480.1"/>
    <property type="gene ID" value="AT4G01480"/>
</dbReference>
<dbReference type="Gramene" id="AT4G01480.2">
    <property type="protein sequence ID" value="AT4G01480.2"/>
    <property type="gene ID" value="AT4G01480"/>
</dbReference>
<dbReference type="KEGG" id="ath:AT4G01480"/>
<dbReference type="Araport" id="AT4G01480"/>
<dbReference type="TAIR" id="AT4G01480">
    <property type="gene designation" value="PPA5"/>
</dbReference>
<dbReference type="eggNOG" id="KOG1626">
    <property type="taxonomic scope" value="Eukaryota"/>
</dbReference>
<dbReference type="HOGENOM" id="CLU_073198_2_1_1"/>
<dbReference type="InParanoid" id="O82597"/>
<dbReference type="OMA" id="EYKHITN"/>
<dbReference type="PhylomeDB" id="O82597"/>
<dbReference type="PRO" id="PR:O82597"/>
<dbReference type="Proteomes" id="UP000006548">
    <property type="component" value="Chromosome 4"/>
</dbReference>
<dbReference type="ExpressionAtlas" id="O82597">
    <property type="expression patterns" value="baseline and differential"/>
</dbReference>
<dbReference type="GO" id="GO:0005829">
    <property type="term" value="C:cytosol"/>
    <property type="evidence" value="ECO:0000314"/>
    <property type="project" value="TAIR"/>
</dbReference>
<dbReference type="GO" id="GO:0005654">
    <property type="term" value="C:nucleoplasm"/>
    <property type="evidence" value="ECO:0000314"/>
    <property type="project" value="TAIR"/>
</dbReference>
<dbReference type="GO" id="GO:0004427">
    <property type="term" value="F:inorganic diphosphate phosphatase activity"/>
    <property type="evidence" value="ECO:0000303"/>
    <property type="project" value="TAIR"/>
</dbReference>
<dbReference type="GO" id="GO:0000287">
    <property type="term" value="F:magnesium ion binding"/>
    <property type="evidence" value="ECO:0007669"/>
    <property type="project" value="InterPro"/>
</dbReference>
<dbReference type="GO" id="GO:0006796">
    <property type="term" value="P:phosphate-containing compound metabolic process"/>
    <property type="evidence" value="ECO:0007669"/>
    <property type="project" value="InterPro"/>
</dbReference>
<dbReference type="CDD" id="cd00412">
    <property type="entry name" value="pyrophosphatase"/>
    <property type="match status" value="1"/>
</dbReference>
<dbReference type="FunFam" id="3.90.80.10:FF:000002">
    <property type="entry name" value="Soluble inorganic pyrophosphatase 4"/>
    <property type="match status" value="1"/>
</dbReference>
<dbReference type="Gene3D" id="3.90.80.10">
    <property type="entry name" value="Inorganic pyrophosphatase"/>
    <property type="match status" value="1"/>
</dbReference>
<dbReference type="HAMAP" id="MF_00209">
    <property type="entry name" value="Inorganic_PPase"/>
    <property type="match status" value="1"/>
</dbReference>
<dbReference type="InterPro" id="IPR008162">
    <property type="entry name" value="Pyrophosphatase"/>
</dbReference>
<dbReference type="InterPro" id="IPR036649">
    <property type="entry name" value="Pyrophosphatase_sf"/>
</dbReference>
<dbReference type="PANTHER" id="PTHR10286">
    <property type="entry name" value="INORGANIC PYROPHOSPHATASE"/>
    <property type="match status" value="1"/>
</dbReference>
<dbReference type="Pfam" id="PF00719">
    <property type="entry name" value="Pyrophosphatase"/>
    <property type="match status" value="1"/>
</dbReference>
<dbReference type="SUPFAM" id="SSF50324">
    <property type="entry name" value="Inorganic pyrophosphatase"/>
    <property type="match status" value="1"/>
</dbReference>
<dbReference type="PROSITE" id="PS00387">
    <property type="entry name" value="PPASE"/>
    <property type="match status" value="1"/>
</dbReference>
<accession>O82597</accession>